<comment type="subcellular location">
    <subcellularLocation>
        <location evidence="2">Cell outer membrane</location>
        <topology evidence="2">Peripheral membrane protein</topology>
    </subcellularLocation>
</comment>
<comment type="similarity">
    <text evidence="2">Belongs to the MipA/OmpV family.</text>
</comment>
<feature type="signal peptide" evidence="1">
    <location>
        <begin position="1"/>
        <end position="21"/>
    </location>
</feature>
<feature type="chain" id="PRO_0000019097" description="Putative outer membrane protein YiaT">
    <location>
        <begin position="22"/>
        <end position="246"/>
    </location>
</feature>
<organism>
    <name type="scientific">Escherichia coli (strain K12)</name>
    <dbReference type="NCBI Taxonomy" id="83333"/>
    <lineage>
        <taxon>Bacteria</taxon>
        <taxon>Pseudomonadati</taxon>
        <taxon>Pseudomonadota</taxon>
        <taxon>Gammaproteobacteria</taxon>
        <taxon>Enterobacterales</taxon>
        <taxon>Enterobacteriaceae</taxon>
        <taxon>Escherichia</taxon>
    </lineage>
</organism>
<accession>P37681</accession>
<accession>Q2M7P7</accession>
<evidence type="ECO:0000255" key="1"/>
<evidence type="ECO:0000305" key="2"/>
<sequence>MLINRNIVALFALPFMASATASELSIGAGAAYNESPYRGYNENTKAIPLISYEGDTFYVRQTTLGFILSQSEKNELSLTASWMPLEFDPTDNDDYAMQQLDKRDSTAMAGVAWYHHERWGTVKASAAADVLDNSNGWVGELSVFHKMQIGRLSLTPALGVLYYDENFSDYYYGISESESRRSGLASYSAQDAWVPYVSLTAKYPIGEHVVLMASAGYSELPEEITDSPMIDRNESFTFVTGVSWRF</sequence>
<reference key="1">
    <citation type="journal article" date="1994" name="Nucleic Acids Res.">
        <title>Analysis of the Escherichia coli genome. V. DNA sequence of the region from 76.0 to 81.5 minutes.</title>
        <authorList>
            <person name="Sofia H.J."/>
            <person name="Burland V."/>
            <person name="Daniels D.L."/>
            <person name="Plunkett G. III"/>
            <person name="Blattner F.R."/>
        </authorList>
    </citation>
    <scope>NUCLEOTIDE SEQUENCE [LARGE SCALE GENOMIC DNA]</scope>
    <source>
        <strain>K12 / MG1655 / ATCC 47076</strain>
    </source>
</reference>
<reference key="2">
    <citation type="journal article" date="1997" name="Science">
        <title>The complete genome sequence of Escherichia coli K-12.</title>
        <authorList>
            <person name="Blattner F.R."/>
            <person name="Plunkett G. III"/>
            <person name="Bloch C.A."/>
            <person name="Perna N.T."/>
            <person name="Burland V."/>
            <person name="Riley M."/>
            <person name="Collado-Vides J."/>
            <person name="Glasner J.D."/>
            <person name="Rode C.K."/>
            <person name="Mayhew G.F."/>
            <person name="Gregor J."/>
            <person name="Davis N.W."/>
            <person name="Kirkpatrick H.A."/>
            <person name="Goeden M.A."/>
            <person name="Rose D.J."/>
            <person name="Mau B."/>
            <person name="Shao Y."/>
        </authorList>
    </citation>
    <scope>NUCLEOTIDE SEQUENCE [LARGE SCALE GENOMIC DNA]</scope>
    <source>
        <strain>K12 / MG1655 / ATCC 47076</strain>
    </source>
</reference>
<reference key="3">
    <citation type="journal article" date="2006" name="Mol. Syst. Biol.">
        <title>Highly accurate genome sequences of Escherichia coli K-12 strains MG1655 and W3110.</title>
        <authorList>
            <person name="Hayashi K."/>
            <person name="Morooka N."/>
            <person name="Yamamoto Y."/>
            <person name="Fujita K."/>
            <person name="Isono K."/>
            <person name="Choi S."/>
            <person name="Ohtsubo E."/>
            <person name="Baba T."/>
            <person name="Wanner B.L."/>
            <person name="Mori H."/>
            <person name="Horiuchi T."/>
        </authorList>
    </citation>
    <scope>NUCLEOTIDE SEQUENCE [LARGE SCALE GENOMIC DNA]</scope>
    <source>
        <strain>K12 / W3110 / ATCC 27325 / DSM 5911</strain>
    </source>
</reference>
<proteinExistence type="inferred from homology"/>
<keyword id="KW-0998">Cell outer membrane</keyword>
<keyword id="KW-0472">Membrane</keyword>
<keyword id="KW-1185">Reference proteome</keyword>
<keyword id="KW-0732">Signal</keyword>
<name>YIAT_ECOLI</name>
<protein>
    <recommendedName>
        <fullName>Putative outer membrane protein YiaT</fullName>
    </recommendedName>
</protein>
<gene>
    <name type="primary">yiaT</name>
    <name type="ordered locus">b3584</name>
    <name type="ordered locus">JW3556</name>
</gene>
<dbReference type="EMBL" id="U00039">
    <property type="protein sequence ID" value="AAB18561.1"/>
    <property type="molecule type" value="Genomic_DNA"/>
</dbReference>
<dbReference type="EMBL" id="U00096">
    <property type="protein sequence ID" value="AAC76608.1"/>
    <property type="molecule type" value="Genomic_DNA"/>
</dbReference>
<dbReference type="EMBL" id="AP009048">
    <property type="protein sequence ID" value="BAE77709.1"/>
    <property type="molecule type" value="Genomic_DNA"/>
</dbReference>
<dbReference type="PIR" id="S47805">
    <property type="entry name" value="S47805"/>
</dbReference>
<dbReference type="RefSeq" id="NP_418041.1">
    <property type="nucleotide sequence ID" value="NC_000913.3"/>
</dbReference>
<dbReference type="RefSeq" id="WP_000906819.1">
    <property type="nucleotide sequence ID" value="NZ_LN832404.1"/>
</dbReference>
<dbReference type="BioGRID" id="4263333">
    <property type="interactions" value="231"/>
</dbReference>
<dbReference type="FunCoup" id="P37681">
    <property type="interactions" value="235"/>
</dbReference>
<dbReference type="STRING" id="511145.b3584"/>
<dbReference type="TCDB" id="1.B.93.1.1">
    <property type="family name" value="the mipa-interacting protein (mipa) family"/>
</dbReference>
<dbReference type="PaxDb" id="511145-b3584"/>
<dbReference type="EnsemblBacteria" id="AAC76608">
    <property type="protein sequence ID" value="AAC76608"/>
    <property type="gene ID" value="b3584"/>
</dbReference>
<dbReference type="GeneID" id="948097"/>
<dbReference type="KEGG" id="ecj:JW3556"/>
<dbReference type="KEGG" id="eco:b3584"/>
<dbReference type="KEGG" id="ecoc:C3026_19430"/>
<dbReference type="PATRIC" id="fig|1411691.4.peg.3128"/>
<dbReference type="EchoBASE" id="EB2196"/>
<dbReference type="eggNOG" id="COG3713">
    <property type="taxonomic scope" value="Bacteria"/>
</dbReference>
<dbReference type="HOGENOM" id="CLU_063465_3_0_6"/>
<dbReference type="InParanoid" id="P37681"/>
<dbReference type="OMA" id="HYHADAG"/>
<dbReference type="OrthoDB" id="5295915at2"/>
<dbReference type="PhylomeDB" id="P37681"/>
<dbReference type="BioCyc" id="EcoCyc:EG12288-MONOMER"/>
<dbReference type="PRO" id="PR:P37681"/>
<dbReference type="Proteomes" id="UP000000625">
    <property type="component" value="Chromosome"/>
</dbReference>
<dbReference type="GO" id="GO:0009279">
    <property type="term" value="C:cell outer membrane"/>
    <property type="evidence" value="ECO:0000315"/>
    <property type="project" value="EcoCyc"/>
</dbReference>
<dbReference type="GO" id="GO:0009252">
    <property type="term" value="P:peptidoglycan biosynthetic process"/>
    <property type="evidence" value="ECO:0000318"/>
    <property type="project" value="GO_Central"/>
</dbReference>
<dbReference type="InterPro" id="IPR010583">
    <property type="entry name" value="MipA"/>
</dbReference>
<dbReference type="PANTHER" id="PTHR38776">
    <property type="entry name" value="MLTA-INTERACTING PROTEIN-RELATED"/>
    <property type="match status" value="1"/>
</dbReference>
<dbReference type="PANTHER" id="PTHR38776:SF1">
    <property type="entry name" value="MLTA-INTERACTING PROTEIN-RELATED"/>
    <property type="match status" value="1"/>
</dbReference>
<dbReference type="Pfam" id="PF06629">
    <property type="entry name" value="MipA"/>
    <property type="match status" value="1"/>
</dbReference>